<organism>
    <name type="scientific">Lactuca sativa</name>
    <name type="common">Garden lettuce</name>
    <dbReference type="NCBI Taxonomy" id="4236"/>
    <lineage>
        <taxon>Eukaryota</taxon>
        <taxon>Viridiplantae</taxon>
        <taxon>Streptophyta</taxon>
        <taxon>Embryophyta</taxon>
        <taxon>Tracheophyta</taxon>
        <taxon>Spermatophyta</taxon>
        <taxon>Magnoliopsida</taxon>
        <taxon>eudicotyledons</taxon>
        <taxon>Gunneridae</taxon>
        <taxon>Pentapetalae</taxon>
        <taxon>asterids</taxon>
        <taxon>campanulids</taxon>
        <taxon>Asterales</taxon>
        <taxon>Asteraceae</taxon>
        <taxon>Cichorioideae</taxon>
        <taxon>Cichorieae</taxon>
        <taxon>Lactucinae</taxon>
        <taxon>Lactuca</taxon>
    </lineage>
</organism>
<feature type="initiator methionine" description="Removed" evidence="1">
    <location>
        <position position="1"/>
    </location>
</feature>
<feature type="chain" id="PRO_0000359660" description="Photosystem II D2 protein">
    <location>
        <begin position="2"/>
        <end position="353"/>
    </location>
</feature>
<feature type="transmembrane region" description="Helical" evidence="2">
    <location>
        <begin position="41"/>
        <end position="61"/>
    </location>
</feature>
<feature type="transmembrane region" description="Helical" evidence="2">
    <location>
        <begin position="125"/>
        <end position="141"/>
    </location>
</feature>
<feature type="transmembrane region" description="Helical" evidence="2">
    <location>
        <begin position="153"/>
        <end position="166"/>
    </location>
</feature>
<feature type="transmembrane region" description="Helical" evidence="2">
    <location>
        <begin position="208"/>
        <end position="228"/>
    </location>
</feature>
<feature type="transmembrane region" description="Helical" evidence="2">
    <location>
        <begin position="279"/>
        <end position="295"/>
    </location>
</feature>
<feature type="binding site" description="axial binding residue" evidence="2">
    <location>
        <position position="118"/>
    </location>
    <ligand>
        <name>chlorophyll a</name>
        <dbReference type="ChEBI" id="CHEBI:58416"/>
        <label>ChlzD2</label>
    </ligand>
    <ligandPart>
        <name>Mg</name>
        <dbReference type="ChEBI" id="CHEBI:25107"/>
    </ligandPart>
</feature>
<feature type="binding site" evidence="2">
    <location>
        <position position="130"/>
    </location>
    <ligand>
        <name>pheophytin a</name>
        <dbReference type="ChEBI" id="CHEBI:136840"/>
        <label>D2</label>
    </ligand>
</feature>
<feature type="binding site" evidence="2">
    <location>
        <position position="143"/>
    </location>
    <ligand>
        <name>pheophytin a</name>
        <dbReference type="ChEBI" id="CHEBI:136840"/>
        <label>D2</label>
    </ligand>
</feature>
<feature type="binding site" description="axial binding residue" evidence="2">
    <location>
        <position position="198"/>
    </location>
    <ligand>
        <name>chlorophyll a</name>
        <dbReference type="ChEBI" id="CHEBI:58416"/>
        <label>PD2</label>
    </ligand>
    <ligandPart>
        <name>Mg</name>
        <dbReference type="ChEBI" id="CHEBI:25107"/>
    </ligandPart>
</feature>
<feature type="binding site" evidence="2">
    <location>
        <position position="215"/>
    </location>
    <ligand>
        <name>a plastoquinone</name>
        <dbReference type="ChEBI" id="CHEBI:17757"/>
        <label>Q(A)</label>
    </ligand>
</feature>
<feature type="binding site" evidence="2">
    <location>
        <position position="215"/>
    </location>
    <ligand>
        <name>Fe cation</name>
        <dbReference type="ChEBI" id="CHEBI:24875"/>
        <note>ligand shared with heterodimeric partner</note>
    </ligand>
</feature>
<feature type="binding site" evidence="2">
    <location>
        <position position="262"/>
    </location>
    <ligand>
        <name>a plastoquinone</name>
        <dbReference type="ChEBI" id="CHEBI:17757"/>
        <label>Q(A)</label>
    </ligand>
</feature>
<feature type="binding site" evidence="2">
    <location>
        <position position="269"/>
    </location>
    <ligand>
        <name>Fe cation</name>
        <dbReference type="ChEBI" id="CHEBI:24875"/>
        <note>ligand shared with heterodimeric partner</note>
    </ligand>
</feature>
<feature type="modified residue" description="N-acetylthreonine" evidence="1">
    <location>
        <position position="2"/>
    </location>
</feature>
<feature type="modified residue" description="Phosphothreonine" evidence="1">
    <location>
        <position position="2"/>
    </location>
</feature>
<proteinExistence type="inferred from homology"/>
<reference key="1">
    <citation type="journal article" date="2005" name="Mol. Biol. Evol.">
        <title>Two chloroplast DNA inversions originated simultaneously during the early evolution of the sunflower family (Asteraceae).</title>
        <authorList>
            <person name="Kim K.-J."/>
            <person name="Choi K.-S."/>
            <person name="Jansen R.K."/>
        </authorList>
    </citation>
    <scope>NUCLEOTIDE SEQUENCE [GENOMIC DNA]</scope>
</reference>
<reference key="2">
    <citation type="journal article" date="2006" name="Transgenic Res.">
        <title>Efficient and stable transformation of Lactuca sativa L. cv. Cisco (lettuce) plastids.</title>
        <authorList>
            <person name="Kanamoto H."/>
            <person name="Yamashita A."/>
            <person name="Asao H."/>
            <person name="Okumura S."/>
            <person name="Takase H."/>
            <person name="Hattori M."/>
            <person name="Yokota A."/>
            <person name="Tomizawa K."/>
        </authorList>
    </citation>
    <scope>NUCLEOTIDE SEQUENCE [LARGE SCALE GENOMIC DNA]</scope>
    <source>
        <strain>cv. Cisco</strain>
    </source>
</reference>
<reference key="3">
    <citation type="submission" date="2006-01" db="EMBL/GenBank/DDBJ databases">
        <title>A comparison of the first two published chloroplast genomes in Asteraceae: Lactuca and Helianthus.</title>
        <authorList>
            <person name="Timme R.E."/>
            <person name="Kuehl J.V."/>
            <person name="Boore J.L."/>
            <person name="Jansen R.K."/>
        </authorList>
    </citation>
    <scope>NUCLEOTIDE SEQUENCE [LARGE SCALE GENOMIC DNA]</scope>
</reference>
<protein>
    <recommendedName>
        <fullName evidence="2">Photosystem II D2 protein</fullName>
        <shortName evidence="2">PSII D2 protein</shortName>
        <ecNumber evidence="2">1.10.3.9</ecNumber>
    </recommendedName>
    <alternativeName>
        <fullName evidence="2">Photosystem Q(A) protein</fullName>
    </alternativeName>
</protein>
<dbReference type="EC" id="1.10.3.9" evidence="2"/>
<dbReference type="EMBL" id="AY865171">
    <property type="protein sequence ID" value="AAX58150.1"/>
    <property type="molecule type" value="Genomic_DNA"/>
</dbReference>
<dbReference type="EMBL" id="AP007232">
    <property type="protein sequence ID" value="BAE47589.1"/>
    <property type="status" value="ALT_INIT"/>
    <property type="molecule type" value="Genomic_DNA"/>
</dbReference>
<dbReference type="EMBL" id="DQ383816">
    <property type="protein sequence ID" value="ABD47228.1"/>
    <property type="molecule type" value="Genomic_DNA"/>
</dbReference>
<dbReference type="RefSeq" id="YP_398324.2">
    <property type="nucleotide sequence ID" value="NC_007578.1"/>
</dbReference>
<dbReference type="SMR" id="Q56P05"/>
<dbReference type="EnsemblPlants" id="rna-gnl|WGS:NBSK|LSAT_1X88080_mrna">
    <property type="protein sequence ID" value="cds-PLY71576.1"/>
    <property type="gene ID" value="gene-LSAT_1X88080"/>
</dbReference>
<dbReference type="EnsemblPlants" id="rna-gnl|WGS:NBSK|LSAT_2X50780_mrna">
    <property type="protein sequence ID" value="cds-PLY95709.1"/>
    <property type="gene ID" value="gene-LSAT_2X50780"/>
</dbReference>
<dbReference type="GeneID" id="3772893"/>
<dbReference type="Gramene" id="rna-gnl|WGS:NBSK|LSAT_1X88080_mrna">
    <property type="protein sequence ID" value="cds-PLY71576.1"/>
    <property type="gene ID" value="gene-LSAT_1X88080"/>
</dbReference>
<dbReference type="Gramene" id="rna-gnl|WGS:NBSK|LSAT_2X50780_mrna">
    <property type="protein sequence ID" value="cds-PLY95709.1"/>
    <property type="gene ID" value="gene-LSAT_2X50780"/>
</dbReference>
<dbReference type="KEGG" id="lsv:3772893"/>
<dbReference type="OrthoDB" id="1924410at2759"/>
<dbReference type="GO" id="GO:0009535">
    <property type="term" value="C:chloroplast thylakoid membrane"/>
    <property type="evidence" value="ECO:0007669"/>
    <property type="project" value="UniProtKB-SubCell"/>
</dbReference>
<dbReference type="GO" id="GO:0009523">
    <property type="term" value="C:photosystem II"/>
    <property type="evidence" value="ECO:0007669"/>
    <property type="project" value="UniProtKB-KW"/>
</dbReference>
<dbReference type="GO" id="GO:0016168">
    <property type="term" value="F:chlorophyll binding"/>
    <property type="evidence" value="ECO:0007669"/>
    <property type="project" value="UniProtKB-UniRule"/>
</dbReference>
<dbReference type="GO" id="GO:0045156">
    <property type="term" value="F:electron transporter, transferring electrons within the cyclic electron transport pathway of photosynthesis activity"/>
    <property type="evidence" value="ECO:0007669"/>
    <property type="project" value="InterPro"/>
</dbReference>
<dbReference type="GO" id="GO:0005506">
    <property type="term" value="F:iron ion binding"/>
    <property type="evidence" value="ECO:0007669"/>
    <property type="project" value="UniProtKB-UniRule"/>
</dbReference>
<dbReference type="GO" id="GO:0010242">
    <property type="term" value="F:oxygen evolving activity"/>
    <property type="evidence" value="ECO:0007669"/>
    <property type="project" value="UniProtKB-EC"/>
</dbReference>
<dbReference type="GO" id="GO:0009772">
    <property type="term" value="P:photosynthetic electron transport in photosystem II"/>
    <property type="evidence" value="ECO:0007669"/>
    <property type="project" value="InterPro"/>
</dbReference>
<dbReference type="CDD" id="cd09288">
    <property type="entry name" value="Photosystem-II_D2"/>
    <property type="match status" value="1"/>
</dbReference>
<dbReference type="FunFam" id="1.20.85.10:FF:000001">
    <property type="entry name" value="photosystem II D2 protein-like"/>
    <property type="match status" value="1"/>
</dbReference>
<dbReference type="Gene3D" id="1.20.85.10">
    <property type="entry name" value="Photosystem II protein D1-like"/>
    <property type="match status" value="1"/>
</dbReference>
<dbReference type="HAMAP" id="MF_01383">
    <property type="entry name" value="PSII_PsbD_D2"/>
    <property type="match status" value="1"/>
</dbReference>
<dbReference type="InterPro" id="IPR055266">
    <property type="entry name" value="D1/D2"/>
</dbReference>
<dbReference type="InterPro" id="IPR036854">
    <property type="entry name" value="Photo_II_D1/D2_sf"/>
</dbReference>
<dbReference type="InterPro" id="IPR000484">
    <property type="entry name" value="Photo_RC_L/M"/>
</dbReference>
<dbReference type="InterPro" id="IPR055265">
    <property type="entry name" value="Photo_RC_L/M_CS"/>
</dbReference>
<dbReference type="InterPro" id="IPR005868">
    <property type="entry name" value="PSII_PsbD/D2"/>
</dbReference>
<dbReference type="NCBIfam" id="TIGR01152">
    <property type="entry name" value="psbD"/>
    <property type="match status" value="1"/>
</dbReference>
<dbReference type="PANTHER" id="PTHR33149:SF12">
    <property type="entry name" value="PHOTOSYSTEM II D2 PROTEIN"/>
    <property type="match status" value="1"/>
</dbReference>
<dbReference type="PANTHER" id="PTHR33149">
    <property type="entry name" value="PHOTOSYSTEM II PROTEIN D1"/>
    <property type="match status" value="1"/>
</dbReference>
<dbReference type="Pfam" id="PF00124">
    <property type="entry name" value="Photo_RC"/>
    <property type="match status" value="1"/>
</dbReference>
<dbReference type="PRINTS" id="PR00256">
    <property type="entry name" value="REACTNCENTRE"/>
</dbReference>
<dbReference type="SUPFAM" id="SSF81483">
    <property type="entry name" value="Bacterial photosystem II reaction centre, L and M subunits"/>
    <property type="match status" value="1"/>
</dbReference>
<dbReference type="PROSITE" id="PS00244">
    <property type="entry name" value="REACTION_CENTER"/>
    <property type="match status" value="1"/>
</dbReference>
<sequence>MTIALGKVTKDENDLFDIMDDWLRRDRFVFVGWSGLLLFPCAYFAVGGWFTGTTFVTSWYTHGLASSYLEGCNFLTAAVSTPANSLAHSLLLLWGPEAQGDFTRWCQLGGLWTFVALHGAFGLIGFMLRQFELARSVQLRPYNAIAFSGPIAVFVSVFLIYPLGQSGWFFAPSFGVAAIFRFILFFQGFHNWTLNPFHMMGVAGVLGAALLCAIHGATVENTLFEDGDGANTFRAFNPTQAEETYSMVTANRFWSQIFGVAFSNKRWLHFFMLFVPVTGLWMSALGVVGLALNLRAYDFVSQEIRAAEDPEFETFYTKNILLNEGIRAWMAAQDQPHENLIFPEEVLPRGNAL</sequence>
<keyword id="KW-0007">Acetylation</keyword>
<keyword id="KW-0148">Chlorophyll</keyword>
<keyword id="KW-0150">Chloroplast</keyword>
<keyword id="KW-0157">Chromophore</keyword>
<keyword id="KW-0249">Electron transport</keyword>
<keyword id="KW-0408">Iron</keyword>
<keyword id="KW-0460">Magnesium</keyword>
<keyword id="KW-0472">Membrane</keyword>
<keyword id="KW-0479">Metal-binding</keyword>
<keyword id="KW-0560">Oxidoreductase</keyword>
<keyword id="KW-0597">Phosphoprotein</keyword>
<keyword id="KW-0602">Photosynthesis</keyword>
<keyword id="KW-0604">Photosystem II</keyword>
<keyword id="KW-0934">Plastid</keyword>
<keyword id="KW-0793">Thylakoid</keyword>
<keyword id="KW-0812">Transmembrane</keyword>
<keyword id="KW-1133">Transmembrane helix</keyword>
<keyword id="KW-0813">Transport</keyword>
<geneLocation type="chloroplast"/>
<name>PSBD_LACSA</name>
<evidence type="ECO:0000250" key="1">
    <source>
        <dbReference type="UniProtKB" id="P56761"/>
    </source>
</evidence>
<evidence type="ECO:0000255" key="2">
    <source>
        <dbReference type="HAMAP-Rule" id="MF_01383"/>
    </source>
</evidence>
<evidence type="ECO:0000305" key="3"/>
<comment type="function">
    <text evidence="2">Photosystem II (PSII) is a light-driven water:plastoquinone oxidoreductase that uses light energy to abstract electrons from H(2)O, generating O(2) and a proton gradient subsequently used for ATP formation. It consists of a core antenna complex that captures photons, and an electron transfer chain that converts photonic excitation into a charge separation. The D1/D2 (PsbA/PsbD) reaction center heterodimer binds P680, the primary electron donor of PSII as well as several subsequent electron acceptors. D2 is needed for assembly of a stable PSII complex.</text>
</comment>
<comment type="catalytic activity">
    <reaction evidence="2">
        <text>2 a plastoquinone + 4 hnu + 2 H2O = 2 a plastoquinol + O2</text>
        <dbReference type="Rhea" id="RHEA:36359"/>
        <dbReference type="Rhea" id="RHEA-COMP:9561"/>
        <dbReference type="Rhea" id="RHEA-COMP:9562"/>
        <dbReference type="ChEBI" id="CHEBI:15377"/>
        <dbReference type="ChEBI" id="CHEBI:15379"/>
        <dbReference type="ChEBI" id="CHEBI:17757"/>
        <dbReference type="ChEBI" id="CHEBI:30212"/>
        <dbReference type="ChEBI" id="CHEBI:62192"/>
        <dbReference type="EC" id="1.10.3.9"/>
    </reaction>
</comment>
<comment type="cofactor">
    <text evidence="2">The D1/D2 heterodimer binds P680, chlorophylls that are the primary electron donor of PSII, and subsequent electron acceptors. It shares a non-heme iron and each subunit binds pheophytin, quinone, additional chlorophylls, carotenoids and lipids. There is also a Cl(-1) ion associated with D1 and D2, which is required for oxygen evolution. The PSII complex binds additional chlorophylls, carotenoids and specific lipids.</text>
</comment>
<comment type="subunit">
    <text evidence="2">PSII is composed of 1 copy each of membrane proteins PsbA, PsbB, PsbC, PsbD, PsbE, PsbF, PsbH, PsbI, PsbJ, PsbK, PsbL, PsbM, PsbT, PsbX, PsbY, PsbZ, Psb30/Ycf12, at least 3 peripheral proteins of the oxygen-evolving complex and a large number of cofactors. It forms dimeric complexes.</text>
</comment>
<comment type="subcellular location">
    <subcellularLocation>
        <location evidence="2">Plastid</location>
        <location evidence="2">Chloroplast thylakoid membrane</location>
        <topology evidence="2">Multi-pass membrane protein</topology>
    </subcellularLocation>
</comment>
<comment type="miscellaneous">
    <text evidence="2">2 of the reaction center chlorophylls (ChlD1 and ChlD2) are entirely coordinated by water.</text>
</comment>
<comment type="similarity">
    <text evidence="2">Belongs to the reaction center PufL/M/PsbA/D family.</text>
</comment>
<comment type="sequence caution" evidence="3">
    <conflict type="erroneous initiation">
        <sequence resource="EMBL-CDS" id="BAE47589"/>
    </conflict>
    <text>Extended N-terminus.</text>
</comment>
<accession>Q56P05</accession>
<accession>Q332Y3</accession>
<gene>
    <name evidence="2" type="primary">psbD</name>
    <name type="ORF">PSC023</name>
</gene>